<keyword id="KW-0030">Aminoacyl-tRNA synthetase</keyword>
<keyword id="KW-0067">ATP-binding</keyword>
<keyword id="KW-0963">Cytoplasm</keyword>
<keyword id="KW-0436">Ligase</keyword>
<keyword id="KW-0547">Nucleotide-binding</keyword>
<keyword id="KW-0648">Protein biosynthesis</keyword>
<keyword id="KW-1185">Reference proteome</keyword>
<accession>B1ZUW6</accession>
<feature type="chain" id="PRO_1000095575" description="Histidine--tRNA ligase">
    <location>
        <begin position="1"/>
        <end position="437"/>
    </location>
</feature>
<reference key="1">
    <citation type="journal article" date="2011" name="J. Bacteriol.">
        <title>Genome sequence of the verrucomicrobium Opitutus terrae PB90-1, an abundant inhabitant of rice paddy soil ecosystems.</title>
        <authorList>
            <person name="van Passel M.W."/>
            <person name="Kant R."/>
            <person name="Palva A."/>
            <person name="Copeland A."/>
            <person name="Lucas S."/>
            <person name="Lapidus A."/>
            <person name="Glavina del Rio T."/>
            <person name="Pitluck S."/>
            <person name="Goltsman E."/>
            <person name="Clum A."/>
            <person name="Sun H."/>
            <person name="Schmutz J."/>
            <person name="Larimer F.W."/>
            <person name="Land M.L."/>
            <person name="Hauser L."/>
            <person name="Kyrpides N."/>
            <person name="Mikhailova N."/>
            <person name="Richardson P.P."/>
            <person name="Janssen P.H."/>
            <person name="de Vos W.M."/>
            <person name="Smidt H."/>
        </authorList>
    </citation>
    <scope>NUCLEOTIDE SEQUENCE [LARGE SCALE GENOMIC DNA]</scope>
    <source>
        <strain>DSM 11246 / JCM 15787 / PB90-1</strain>
    </source>
</reference>
<organism>
    <name type="scientific">Opitutus terrae (strain DSM 11246 / JCM 15787 / PB90-1)</name>
    <dbReference type="NCBI Taxonomy" id="452637"/>
    <lineage>
        <taxon>Bacteria</taxon>
        <taxon>Pseudomonadati</taxon>
        <taxon>Verrucomicrobiota</taxon>
        <taxon>Opitutia</taxon>
        <taxon>Opitutales</taxon>
        <taxon>Opitutaceae</taxon>
        <taxon>Opitutus</taxon>
    </lineage>
</organism>
<dbReference type="EC" id="6.1.1.21" evidence="1"/>
<dbReference type="EMBL" id="CP001032">
    <property type="protein sequence ID" value="ACB75936.1"/>
    <property type="molecule type" value="Genomic_DNA"/>
</dbReference>
<dbReference type="RefSeq" id="WP_012375471.1">
    <property type="nucleotide sequence ID" value="NC_010571.1"/>
</dbReference>
<dbReference type="SMR" id="B1ZUW6"/>
<dbReference type="STRING" id="452637.Oter_2655"/>
<dbReference type="KEGG" id="ote:Oter_2655"/>
<dbReference type="eggNOG" id="COG0124">
    <property type="taxonomic scope" value="Bacteria"/>
</dbReference>
<dbReference type="HOGENOM" id="CLU_025113_3_1_0"/>
<dbReference type="OrthoDB" id="9800814at2"/>
<dbReference type="Proteomes" id="UP000007013">
    <property type="component" value="Chromosome"/>
</dbReference>
<dbReference type="GO" id="GO:0005737">
    <property type="term" value="C:cytoplasm"/>
    <property type="evidence" value="ECO:0007669"/>
    <property type="project" value="UniProtKB-SubCell"/>
</dbReference>
<dbReference type="GO" id="GO:0005524">
    <property type="term" value="F:ATP binding"/>
    <property type="evidence" value="ECO:0007669"/>
    <property type="project" value="UniProtKB-UniRule"/>
</dbReference>
<dbReference type="GO" id="GO:0004821">
    <property type="term" value="F:histidine-tRNA ligase activity"/>
    <property type="evidence" value="ECO:0007669"/>
    <property type="project" value="UniProtKB-UniRule"/>
</dbReference>
<dbReference type="GO" id="GO:0006427">
    <property type="term" value="P:histidyl-tRNA aminoacylation"/>
    <property type="evidence" value="ECO:0007669"/>
    <property type="project" value="UniProtKB-UniRule"/>
</dbReference>
<dbReference type="CDD" id="cd00773">
    <property type="entry name" value="HisRS-like_core"/>
    <property type="match status" value="1"/>
</dbReference>
<dbReference type="CDD" id="cd00859">
    <property type="entry name" value="HisRS_anticodon"/>
    <property type="match status" value="1"/>
</dbReference>
<dbReference type="Gene3D" id="3.40.50.800">
    <property type="entry name" value="Anticodon-binding domain"/>
    <property type="match status" value="1"/>
</dbReference>
<dbReference type="Gene3D" id="3.30.930.10">
    <property type="entry name" value="Bira Bifunctional Protein, Domain 2"/>
    <property type="match status" value="1"/>
</dbReference>
<dbReference type="HAMAP" id="MF_00127">
    <property type="entry name" value="His_tRNA_synth"/>
    <property type="match status" value="1"/>
</dbReference>
<dbReference type="InterPro" id="IPR006195">
    <property type="entry name" value="aa-tRNA-synth_II"/>
</dbReference>
<dbReference type="InterPro" id="IPR045864">
    <property type="entry name" value="aa-tRNA-synth_II/BPL/LPL"/>
</dbReference>
<dbReference type="InterPro" id="IPR004154">
    <property type="entry name" value="Anticodon-bd"/>
</dbReference>
<dbReference type="InterPro" id="IPR036621">
    <property type="entry name" value="Anticodon-bd_dom_sf"/>
</dbReference>
<dbReference type="InterPro" id="IPR015807">
    <property type="entry name" value="His-tRNA-ligase"/>
</dbReference>
<dbReference type="InterPro" id="IPR041715">
    <property type="entry name" value="HisRS-like_core"/>
</dbReference>
<dbReference type="InterPro" id="IPR004516">
    <property type="entry name" value="HisRS/HisZ"/>
</dbReference>
<dbReference type="InterPro" id="IPR033656">
    <property type="entry name" value="HisRS_anticodon"/>
</dbReference>
<dbReference type="NCBIfam" id="TIGR00442">
    <property type="entry name" value="hisS"/>
    <property type="match status" value="1"/>
</dbReference>
<dbReference type="PANTHER" id="PTHR43707:SF1">
    <property type="entry name" value="HISTIDINE--TRNA LIGASE, MITOCHONDRIAL-RELATED"/>
    <property type="match status" value="1"/>
</dbReference>
<dbReference type="PANTHER" id="PTHR43707">
    <property type="entry name" value="HISTIDYL-TRNA SYNTHETASE"/>
    <property type="match status" value="1"/>
</dbReference>
<dbReference type="Pfam" id="PF03129">
    <property type="entry name" value="HGTP_anticodon"/>
    <property type="match status" value="1"/>
</dbReference>
<dbReference type="Pfam" id="PF13393">
    <property type="entry name" value="tRNA-synt_His"/>
    <property type="match status" value="1"/>
</dbReference>
<dbReference type="PIRSF" id="PIRSF001549">
    <property type="entry name" value="His-tRNA_synth"/>
    <property type="match status" value="1"/>
</dbReference>
<dbReference type="SUPFAM" id="SSF52954">
    <property type="entry name" value="Class II aaRS ABD-related"/>
    <property type="match status" value="1"/>
</dbReference>
<dbReference type="SUPFAM" id="SSF55681">
    <property type="entry name" value="Class II aaRS and biotin synthetases"/>
    <property type="match status" value="1"/>
</dbReference>
<dbReference type="PROSITE" id="PS50862">
    <property type="entry name" value="AA_TRNA_LIGASE_II"/>
    <property type="match status" value="1"/>
</dbReference>
<gene>
    <name evidence="1" type="primary">hisS</name>
    <name type="ordered locus">Oter_2655</name>
</gene>
<protein>
    <recommendedName>
        <fullName evidence="1">Histidine--tRNA ligase</fullName>
        <ecNumber evidence="1">6.1.1.21</ecNumber>
    </recommendedName>
    <alternativeName>
        <fullName evidence="1">Histidyl-tRNA synthetase</fullName>
        <shortName evidence="1">HisRS</shortName>
    </alternativeName>
</protein>
<evidence type="ECO:0000255" key="1">
    <source>
        <dbReference type="HAMAP-Rule" id="MF_00127"/>
    </source>
</evidence>
<name>SYH_OPITP</name>
<proteinExistence type="inferred from homology"/>
<sequence length="437" mass="48686">MATFQSLPGFREFYPDALARRNHIFRLWRQTAVAFGFAEYDAPVLEPLELYKTKSGDEIEAQLFSFTDKGGREVALRPEMTPTVCRMVGAKANALKRPIKWFSIAEYYRYERAQKGRERAFFQFNADLFAEPGPEAEIELIALLTQCLKAFGLTEQDFYIRLSDRNLWFFYLEALGLDEPRIRAVLSAVDKFEKVGDDAFKPYAEQFGPLDLALKQRVLEFLQIKTLASLEQTLAPLGGEKLAARLGDWRKLLDGLAAMGLSPFIEVDLGVVRGLAYYTGFVFEAFDRKGELRAIAGGGRYNDLVKKLGGPDLPAVGFAIGDVTLGLLLDARGLMPAFVQASDVYCVIGGAAERQAAFADVNALRAAGFKVDYPLKDVPFGKQFKLAADSGAKLALIYGPDELAKNVVKLRDLTTRTETDVPREQVQAMVRDFFSTD</sequence>
<comment type="catalytic activity">
    <reaction evidence="1">
        <text>tRNA(His) + L-histidine + ATP = L-histidyl-tRNA(His) + AMP + diphosphate + H(+)</text>
        <dbReference type="Rhea" id="RHEA:17313"/>
        <dbReference type="Rhea" id="RHEA-COMP:9665"/>
        <dbReference type="Rhea" id="RHEA-COMP:9689"/>
        <dbReference type="ChEBI" id="CHEBI:15378"/>
        <dbReference type="ChEBI" id="CHEBI:30616"/>
        <dbReference type="ChEBI" id="CHEBI:33019"/>
        <dbReference type="ChEBI" id="CHEBI:57595"/>
        <dbReference type="ChEBI" id="CHEBI:78442"/>
        <dbReference type="ChEBI" id="CHEBI:78527"/>
        <dbReference type="ChEBI" id="CHEBI:456215"/>
        <dbReference type="EC" id="6.1.1.21"/>
    </reaction>
</comment>
<comment type="subunit">
    <text evidence="1">Homodimer.</text>
</comment>
<comment type="subcellular location">
    <subcellularLocation>
        <location evidence="1">Cytoplasm</location>
    </subcellularLocation>
</comment>
<comment type="similarity">
    <text evidence="1">Belongs to the class-II aminoacyl-tRNA synthetase family.</text>
</comment>